<dbReference type="EC" id="3.4.-.-" evidence="1"/>
<dbReference type="EMBL" id="Z49220">
    <property type="protein sequence ID" value="CAA89193.1"/>
    <property type="molecule type" value="Genomic_DNA"/>
</dbReference>
<dbReference type="EMBL" id="AF012132">
    <property type="protein sequence ID" value="AAC38295.1"/>
    <property type="molecule type" value="Genomic_DNA"/>
</dbReference>
<dbReference type="EMBL" id="AY183373">
    <property type="protein sequence ID" value="AAO25549.1"/>
    <property type="molecule type" value="Genomic_DNA"/>
</dbReference>
<dbReference type="RefSeq" id="WP_001830005.1">
    <property type="nucleotide sequence ID" value="NZ_WLUZ01000001.1"/>
</dbReference>
<dbReference type="SMR" id="P0C0N4"/>
<dbReference type="MEROPS" id="C75.001"/>
<dbReference type="OMA" id="PADHENK"/>
<dbReference type="OrthoDB" id="2183538at2"/>
<dbReference type="GO" id="GO:0005886">
    <property type="term" value="C:plasma membrane"/>
    <property type="evidence" value="ECO:0007669"/>
    <property type="project" value="UniProtKB-SubCell"/>
</dbReference>
<dbReference type="GO" id="GO:0008233">
    <property type="term" value="F:peptidase activity"/>
    <property type="evidence" value="ECO:0007669"/>
    <property type="project" value="UniProtKB-UniRule"/>
</dbReference>
<dbReference type="GO" id="GO:0006508">
    <property type="term" value="P:proteolysis"/>
    <property type="evidence" value="ECO:0007669"/>
    <property type="project" value="UniProtKB-KW"/>
</dbReference>
<dbReference type="GO" id="GO:0009372">
    <property type="term" value="P:quorum sensing"/>
    <property type="evidence" value="ECO:0007669"/>
    <property type="project" value="UniProtKB-UniRule"/>
</dbReference>
<dbReference type="HAMAP" id="MF_00784">
    <property type="entry name" value="AgrB"/>
    <property type="match status" value="1"/>
</dbReference>
<dbReference type="InterPro" id="IPR006741">
    <property type="entry name" value="AgrB"/>
</dbReference>
<dbReference type="Pfam" id="PF04647">
    <property type="entry name" value="AgrB"/>
    <property type="match status" value="1"/>
</dbReference>
<dbReference type="SMART" id="SM00793">
    <property type="entry name" value="AgrB"/>
    <property type="match status" value="1"/>
</dbReference>
<gene>
    <name evidence="1" type="primary">agrB</name>
</gene>
<accession>P0C0N4</accession>
<accession>O68161</accession>
<accession>O86859</accession>
<keyword id="KW-1003">Cell membrane</keyword>
<keyword id="KW-0378">Hydrolase</keyword>
<keyword id="KW-0472">Membrane</keyword>
<keyword id="KW-0645">Protease</keyword>
<keyword id="KW-0673">Quorum sensing</keyword>
<keyword id="KW-0812">Transmembrane</keyword>
<keyword id="KW-1133">Transmembrane helix</keyword>
<keyword id="KW-0843">Virulence</keyword>
<sequence length="194" mass="22573">MKIIDKKIEQFAQYLQRKNNLDHIQFLKIRLGMQVLAINIEKSIVVYGLAIIFHTFFYTLLTHLSYFLIRRHAHGTHANSSLLCHIQNIIFFIIFPYLIIKLDINYFVLLSMALVGLIITILYAPAATKKQPIPRRLVKRKKILSIFLYCTIVVISLVTKEPVNKLILFGVILESLTLLPIFFPKEDINHGKHF</sequence>
<evidence type="ECO:0000255" key="1">
    <source>
        <dbReference type="HAMAP-Rule" id="MF_00784"/>
    </source>
</evidence>
<evidence type="ECO:0000305" key="2"/>
<protein>
    <recommendedName>
        <fullName evidence="1">Accessory gene regulator protein B</fullName>
        <ecNumber evidence="1">3.4.-.-</ecNumber>
    </recommendedName>
</protein>
<feature type="chain" id="PRO_0000168126" description="Accessory gene regulator protein B">
    <location>
        <begin position="1"/>
        <end position="194"/>
    </location>
</feature>
<feature type="transmembrane region" description="Helical" evidence="1">
    <location>
        <begin position="44"/>
        <end position="64"/>
    </location>
</feature>
<feature type="transmembrane region" description="Helical" evidence="1">
    <location>
        <begin position="80"/>
        <end position="100"/>
    </location>
</feature>
<feature type="transmembrane region" description="Helical" evidence="1">
    <location>
        <begin position="107"/>
        <end position="127"/>
    </location>
</feature>
<feature type="transmembrane region" description="Helical" evidence="1">
    <location>
        <begin position="142"/>
        <end position="162"/>
    </location>
</feature>
<feature type="transmembrane region" description="Helical" evidence="1">
    <location>
        <begin position="163"/>
        <end position="183"/>
    </location>
</feature>
<feature type="sequence conflict" description="In Ref. 2; AAC38295." evidence="2" ref="2">
    <original>QYLQ</original>
    <variation>HIYNV</variation>
    <location>
        <begin position="13"/>
        <end position="16"/>
    </location>
</feature>
<feature type="sequence conflict" description="In Ref. 2; AAC38295." evidence="2" ref="2">
    <original>K</original>
    <variation>N</variation>
    <location>
        <position position="192"/>
    </location>
</feature>
<reference key="1">
    <citation type="journal article" date="1998" name="FEMS Microbiol. Lett.">
        <title>Cloning and characterization of an accessory gene regulator (agr)-like locus from Staphylococcus epidermidis.</title>
        <authorList>
            <person name="Van Wamel W.J.B."/>
            <person name="Rossum G."/>
            <person name="Verhoef J."/>
            <person name="Vandenbroucke-Grauls C.M.J.E."/>
            <person name="Fluit A.C."/>
        </authorList>
    </citation>
    <scope>NUCLEOTIDE SEQUENCE [GENOMIC DNA]</scope>
    <source>
        <strain>0869.12.80</strain>
    </source>
</reference>
<reference key="2">
    <citation type="journal article" date="1998" name="FEBS Lett.">
        <title>Structure of the pheromone peptide of the Staphylococcus epidermidis agr system.</title>
        <authorList>
            <person name="Otto M."/>
            <person name="Suszmuth R."/>
            <person name="Jung G."/>
            <person name="Goetz F."/>
        </authorList>
    </citation>
    <scope>NUCLEOTIDE SEQUENCE [GENOMIC DNA]</scope>
    <source>
        <strain>ATCC 14990 / DSM 20044 / CIP 81.55 / NCTC 11047</strain>
    </source>
</reference>
<reference key="3">
    <citation type="journal article" date="2003" name="J. Infect. Dis.">
        <title>Quorum-sensing control of biofilm factors in Staphylococcus epidermidis.</title>
        <authorList>
            <person name="Vuong C."/>
            <person name="Gerke C."/>
            <person name="Somerville G.A."/>
            <person name="Fischer E.R."/>
            <person name="Otto M."/>
        </authorList>
    </citation>
    <scope>NUCLEOTIDE SEQUENCE [GENOMIC DNA]</scope>
    <source>
        <strain>O47</strain>
    </source>
</reference>
<organism>
    <name type="scientific">Staphylococcus epidermidis</name>
    <dbReference type="NCBI Taxonomy" id="1282"/>
    <lineage>
        <taxon>Bacteria</taxon>
        <taxon>Bacillati</taxon>
        <taxon>Bacillota</taxon>
        <taxon>Bacilli</taxon>
        <taxon>Bacillales</taxon>
        <taxon>Staphylococcaceae</taxon>
        <taxon>Staphylococcus</taxon>
    </lineage>
</organism>
<name>AGRB_STAEP</name>
<proteinExistence type="inferred from homology"/>
<comment type="function">
    <text evidence="1">Essential for the production of a quorum sensing system signal molecule, the autoinducing peptide (AIP). This quorum sensing system is responsible for the regulation of the expression of virulence factor genes. Involved in the proteolytic processing of AgrD, the precursor of AIP.</text>
</comment>
<comment type="subcellular location">
    <subcellularLocation>
        <location evidence="1">Cell membrane</location>
        <topology evidence="1">Multi-pass membrane protein</topology>
    </subcellularLocation>
</comment>
<comment type="similarity">
    <text evidence="1">Belongs to the AgrB family.</text>
</comment>